<protein>
    <recommendedName>
        <fullName evidence="1">7-methyl-GTP pyrophosphatase</fullName>
        <shortName evidence="1">m(7)GTP pyrophosphatase</shortName>
        <ecNumber evidence="1">3.6.1.-</ecNumber>
    </recommendedName>
</protein>
<keyword id="KW-0963">Cytoplasm</keyword>
<keyword id="KW-0378">Hydrolase</keyword>
<keyword id="KW-0546">Nucleotide metabolism</keyword>
<evidence type="ECO:0000255" key="1">
    <source>
        <dbReference type="HAMAP-Rule" id="MF_00528"/>
    </source>
</evidence>
<feature type="chain" id="PRO_0000122992" description="7-methyl-GTP pyrophosphatase">
    <location>
        <begin position="1"/>
        <end position="199"/>
    </location>
</feature>
<feature type="active site" description="Proton acceptor" evidence="1">
    <location>
        <position position="73"/>
    </location>
</feature>
<feature type="site" description="Important for substrate specificity" evidence="1">
    <location>
        <position position="16"/>
    </location>
</feature>
<feature type="site" description="Important for substrate specificity" evidence="1">
    <location>
        <position position="74"/>
    </location>
</feature>
<feature type="site" description="Important for substrate specificity" evidence="1">
    <location>
        <position position="156"/>
    </location>
</feature>
<sequence length="199" mass="21093">MPAIPPKLILASSSRYRRELLSRLRLPFTAISPDVDETPQPGEAPADLALRLSVAKAMAVAATHPGSVVIGSDQVATVDGDPIGKPGGFERAREQLRRLSGRAVEFHSAMAVTDGVHTETADIVTLCRFRTLTDAAIDAYLRAEEPYDTAGSAKAESLGIALMDSIRSDDPTAIIGLPLIALTRMLGRFGLDPLTGHPA</sequence>
<proteinExistence type="inferred from homology"/>
<accession>Q7WD16</accession>
<organism>
    <name type="scientific">Bordetella bronchiseptica (strain ATCC BAA-588 / NCTC 13252 / RB50)</name>
    <name type="common">Alcaligenes bronchisepticus</name>
    <dbReference type="NCBI Taxonomy" id="257310"/>
    <lineage>
        <taxon>Bacteria</taxon>
        <taxon>Pseudomonadati</taxon>
        <taxon>Pseudomonadota</taxon>
        <taxon>Betaproteobacteria</taxon>
        <taxon>Burkholderiales</taxon>
        <taxon>Alcaligenaceae</taxon>
        <taxon>Bordetella</taxon>
    </lineage>
</organism>
<dbReference type="EC" id="3.6.1.-" evidence="1"/>
<dbReference type="EMBL" id="BX640448">
    <property type="protein sequence ID" value="CAE35736.1"/>
    <property type="molecule type" value="Genomic_DNA"/>
</dbReference>
<dbReference type="RefSeq" id="WP_003813831.1">
    <property type="nucleotide sequence ID" value="NC_002927.3"/>
</dbReference>
<dbReference type="SMR" id="Q7WD16"/>
<dbReference type="KEGG" id="bbr:BB3762"/>
<dbReference type="eggNOG" id="COG0424">
    <property type="taxonomic scope" value="Bacteria"/>
</dbReference>
<dbReference type="HOGENOM" id="CLU_040416_1_0_4"/>
<dbReference type="Proteomes" id="UP000001027">
    <property type="component" value="Chromosome"/>
</dbReference>
<dbReference type="GO" id="GO:0005737">
    <property type="term" value="C:cytoplasm"/>
    <property type="evidence" value="ECO:0007669"/>
    <property type="project" value="UniProtKB-SubCell"/>
</dbReference>
<dbReference type="GO" id="GO:0047429">
    <property type="term" value="F:nucleoside triphosphate diphosphatase activity"/>
    <property type="evidence" value="ECO:0007669"/>
    <property type="project" value="InterPro"/>
</dbReference>
<dbReference type="GO" id="GO:0009117">
    <property type="term" value="P:nucleotide metabolic process"/>
    <property type="evidence" value="ECO:0007669"/>
    <property type="project" value="UniProtKB-KW"/>
</dbReference>
<dbReference type="CDD" id="cd00555">
    <property type="entry name" value="Maf"/>
    <property type="match status" value="1"/>
</dbReference>
<dbReference type="Gene3D" id="3.90.950.10">
    <property type="match status" value="1"/>
</dbReference>
<dbReference type="HAMAP" id="MF_00528">
    <property type="entry name" value="Maf"/>
    <property type="match status" value="1"/>
</dbReference>
<dbReference type="InterPro" id="IPR029001">
    <property type="entry name" value="ITPase-like_fam"/>
</dbReference>
<dbReference type="InterPro" id="IPR003697">
    <property type="entry name" value="Maf-like"/>
</dbReference>
<dbReference type="NCBIfam" id="TIGR00172">
    <property type="entry name" value="maf"/>
    <property type="match status" value="1"/>
</dbReference>
<dbReference type="PANTHER" id="PTHR43213:SF10">
    <property type="entry name" value="7-METHYL-GTP PYROPHOSPHATASE"/>
    <property type="match status" value="1"/>
</dbReference>
<dbReference type="PANTHER" id="PTHR43213">
    <property type="entry name" value="BIFUNCTIONAL DTTP/UTP PYROPHOSPHATASE/METHYLTRANSFERASE PROTEIN-RELATED"/>
    <property type="match status" value="1"/>
</dbReference>
<dbReference type="Pfam" id="PF02545">
    <property type="entry name" value="Maf"/>
    <property type="match status" value="1"/>
</dbReference>
<dbReference type="PIRSF" id="PIRSF006305">
    <property type="entry name" value="Maf"/>
    <property type="match status" value="1"/>
</dbReference>
<dbReference type="SUPFAM" id="SSF52972">
    <property type="entry name" value="ITPase-like"/>
    <property type="match status" value="1"/>
</dbReference>
<name>NTPPB_BORBR</name>
<gene>
    <name type="ordered locus">BB3762</name>
</gene>
<comment type="function">
    <text evidence="1">Nucleoside triphosphate pyrophosphatase that hydrolyzes 7-methyl-GTP (m(7)GTP). May have a dual role in cell division arrest and in preventing the incorporation of modified nucleotides into cellular nucleic acids.</text>
</comment>
<comment type="catalytic activity">
    <reaction evidence="1">
        <text>N(7)-methyl-GTP + H2O = N(7)-methyl-GMP + diphosphate + H(+)</text>
        <dbReference type="Rhea" id="RHEA:58744"/>
        <dbReference type="ChEBI" id="CHEBI:15377"/>
        <dbReference type="ChEBI" id="CHEBI:15378"/>
        <dbReference type="ChEBI" id="CHEBI:33019"/>
        <dbReference type="ChEBI" id="CHEBI:58285"/>
        <dbReference type="ChEBI" id="CHEBI:87133"/>
    </reaction>
</comment>
<comment type="cofactor">
    <cofactor evidence="1">
        <name>a divalent metal cation</name>
        <dbReference type="ChEBI" id="CHEBI:60240"/>
    </cofactor>
</comment>
<comment type="subcellular location">
    <subcellularLocation>
        <location evidence="1">Cytoplasm</location>
    </subcellularLocation>
</comment>
<comment type="similarity">
    <text evidence="1">Belongs to the Maf family. YceF subfamily.</text>
</comment>
<reference key="1">
    <citation type="journal article" date="2003" name="Nat. Genet.">
        <title>Comparative analysis of the genome sequences of Bordetella pertussis, Bordetella parapertussis and Bordetella bronchiseptica.</title>
        <authorList>
            <person name="Parkhill J."/>
            <person name="Sebaihia M."/>
            <person name="Preston A."/>
            <person name="Murphy L.D."/>
            <person name="Thomson N.R."/>
            <person name="Harris D.E."/>
            <person name="Holden M.T.G."/>
            <person name="Churcher C.M."/>
            <person name="Bentley S.D."/>
            <person name="Mungall K.L."/>
            <person name="Cerdeno-Tarraga A.-M."/>
            <person name="Temple L."/>
            <person name="James K.D."/>
            <person name="Harris B."/>
            <person name="Quail M.A."/>
            <person name="Achtman M."/>
            <person name="Atkin R."/>
            <person name="Baker S."/>
            <person name="Basham D."/>
            <person name="Bason N."/>
            <person name="Cherevach I."/>
            <person name="Chillingworth T."/>
            <person name="Collins M."/>
            <person name="Cronin A."/>
            <person name="Davis P."/>
            <person name="Doggett J."/>
            <person name="Feltwell T."/>
            <person name="Goble A."/>
            <person name="Hamlin N."/>
            <person name="Hauser H."/>
            <person name="Holroyd S."/>
            <person name="Jagels K."/>
            <person name="Leather S."/>
            <person name="Moule S."/>
            <person name="Norberczak H."/>
            <person name="O'Neil S."/>
            <person name="Ormond D."/>
            <person name="Price C."/>
            <person name="Rabbinowitsch E."/>
            <person name="Rutter S."/>
            <person name="Sanders M."/>
            <person name="Saunders D."/>
            <person name="Seeger K."/>
            <person name="Sharp S."/>
            <person name="Simmonds M."/>
            <person name="Skelton J."/>
            <person name="Squares R."/>
            <person name="Squares S."/>
            <person name="Stevens K."/>
            <person name="Unwin L."/>
            <person name="Whitehead S."/>
            <person name="Barrell B.G."/>
            <person name="Maskell D.J."/>
        </authorList>
    </citation>
    <scope>NUCLEOTIDE SEQUENCE [LARGE SCALE GENOMIC DNA]</scope>
    <source>
        <strain>ATCC BAA-588 / NCTC 13252 / RB50</strain>
    </source>
</reference>